<keyword id="KW-0961">Cell wall biogenesis/degradation</keyword>
<keyword id="KW-1015">Disulfide bond</keyword>
<keyword id="KW-0325">Glycoprotein</keyword>
<keyword id="KW-0326">Glycosidase</keyword>
<keyword id="KW-0378">Hydrolase</keyword>
<keyword id="KW-1185">Reference proteome</keyword>
<keyword id="KW-0677">Repeat</keyword>
<keyword id="KW-0964">Secreted</keyword>
<keyword id="KW-0732">Signal</keyword>
<keyword id="KW-0865">Zymogen</keyword>
<name>PGLR_EMENI</name>
<accession>Q5ATQ3</accession>
<accession>C8VE18</accession>
<accession>Q1HFQ7</accession>
<proteinExistence type="evidence at protein level"/>
<dbReference type="EC" id="3.2.1.15"/>
<dbReference type="EMBL" id="DQ490517">
    <property type="protein sequence ID" value="ABF50893.1"/>
    <property type="molecule type" value="mRNA"/>
</dbReference>
<dbReference type="EMBL" id="AACD01000150">
    <property type="protein sequence ID" value="EAA66950.1"/>
    <property type="molecule type" value="Genomic_DNA"/>
</dbReference>
<dbReference type="EMBL" id="BN001305">
    <property type="protein sequence ID" value="CBF80314.1"/>
    <property type="molecule type" value="Genomic_DNA"/>
</dbReference>
<dbReference type="RefSeq" id="XP_681596.1">
    <property type="nucleotide sequence ID" value="XM_676504.1"/>
</dbReference>
<dbReference type="SMR" id="Q5ATQ3"/>
<dbReference type="STRING" id="227321.Q5ATQ3"/>
<dbReference type="CAZy" id="GH28">
    <property type="family name" value="Glycoside Hydrolase Family 28"/>
</dbReference>
<dbReference type="EnsemblFungi" id="CBF80314">
    <property type="protein sequence ID" value="CBF80314"/>
    <property type="gene ID" value="ANIA_08327"/>
</dbReference>
<dbReference type="KEGG" id="ani:ANIA_08327"/>
<dbReference type="VEuPathDB" id="FungiDB:AN8327"/>
<dbReference type="eggNOG" id="ENOG502SHAF">
    <property type="taxonomic scope" value="Eukaryota"/>
</dbReference>
<dbReference type="HOGENOM" id="CLU_040116_0_0_1"/>
<dbReference type="InParanoid" id="Q5ATQ3"/>
<dbReference type="OMA" id="GYCHGGH"/>
<dbReference type="OrthoDB" id="1546079at2759"/>
<dbReference type="Proteomes" id="UP000000560">
    <property type="component" value="Chromosome V"/>
</dbReference>
<dbReference type="GO" id="GO:0005576">
    <property type="term" value="C:extracellular region"/>
    <property type="evidence" value="ECO:0000250"/>
    <property type="project" value="UniProtKB"/>
</dbReference>
<dbReference type="GO" id="GO:0004650">
    <property type="term" value="F:polygalacturonase activity"/>
    <property type="evidence" value="ECO:0000314"/>
    <property type="project" value="UniProtKB"/>
</dbReference>
<dbReference type="GO" id="GO:0071555">
    <property type="term" value="P:cell wall organization"/>
    <property type="evidence" value="ECO:0007669"/>
    <property type="project" value="UniProtKB-KW"/>
</dbReference>
<dbReference type="GO" id="GO:0045490">
    <property type="term" value="P:pectin catabolic process"/>
    <property type="evidence" value="ECO:0000314"/>
    <property type="project" value="UniProtKB"/>
</dbReference>
<dbReference type="FunFam" id="2.160.20.10:FF:000002">
    <property type="entry name" value="Endopolygalacturonase D"/>
    <property type="match status" value="1"/>
</dbReference>
<dbReference type="Gene3D" id="2.160.20.10">
    <property type="entry name" value="Single-stranded right-handed beta-helix, Pectin lyase-like"/>
    <property type="match status" value="1"/>
</dbReference>
<dbReference type="InterPro" id="IPR000743">
    <property type="entry name" value="Glyco_hydro_28"/>
</dbReference>
<dbReference type="InterPro" id="IPR050434">
    <property type="entry name" value="Glycosyl_hydrlase_28"/>
</dbReference>
<dbReference type="InterPro" id="IPR006626">
    <property type="entry name" value="PbH1"/>
</dbReference>
<dbReference type="InterPro" id="IPR012334">
    <property type="entry name" value="Pectin_lyas_fold"/>
</dbReference>
<dbReference type="InterPro" id="IPR011050">
    <property type="entry name" value="Pectin_lyase_fold/virulence"/>
</dbReference>
<dbReference type="PANTHER" id="PTHR31884">
    <property type="entry name" value="POLYGALACTURONASE"/>
    <property type="match status" value="1"/>
</dbReference>
<dbReference type="PANTHER" id="PTHR31884:SF1">
    <property type="entry name" value="POLYGALACTURONASE"/>
    <property type="match status" value="1"/>
</dbReference>
<dbReference type="Pfam" id="PF00295">
    <property type="entry name" value="Glyco_hydro_28"/>
    <property type="match status" value="1"/>
</dbReference>
<dbReference type="SMART" id="SM00710">
    <property type="entry name" value="PbH1"/>
    <property type="match status" value="7"/>
</dbReference>
<dbReference type="SUPFAM" id="SSF51126">
    <property type="entry name" value="Pectin lyase-like"/>
    <property type="match status" value="1"/>
</dbReference>
<dbReference type="PROSITE" id="PS00502">
    <property type="entry name" value="POLYGALACTURONASE"/>
    <property type="match status" value="1"/>
</dbReference>
<organism>
    <name type="scientific">Emericella nidulans (strain FGSC A4 / ATCC 38163 / CBS 112.46 / NRRL 194 / M139)</name>
    <name type="common">Aspergillus nidulans</name>
    <dbReference type="NCBI Taxonomy" id="227321"/>
    <lineage>
        <taxon>Eukaryota</taxon>
        <taxon>Fungi</taxon>
        <taxon>Dikarya</taxon>
        <taxon>Ascomycota</taxon>
        <taxon>Pezizomycotina</taxon>
        <taxon>Eurotiomycetes</taxon>
        <taxon>Eurotiomycetidae</taxon>
        <taxon>Eurotiales</taxon>
        <taxon>Aspergillaceae</taxon>
        <taxon>Aspergillus</taxon>
        <taxon>Aspergillus subgen. Nidulantes</taxon>
    </lineage>
</organism>
<reference key="1">
    <citation type="journal article" date="2006" name="Proc. Natl. Acad. Sci. U.S.A.">
        <title>Development and application of a suite of polysaccharide-degrading enzymes for analyzing plant cell walls.</title>
        <authorList>
            <person name="Bauer S."/>
            <person name="Vasu P."/>
            <person name="Persson S."/>
            <person name="Mort A.J."/>
            <person name="Somerville C.R."/>
        </authorList>
    </citation>
    <scope>NUCLEOTIDE SEQUENCE [MRNA]</scope>
    <scope>FUNCTION</scope>
    <scope>BIOPHYSICOCHEMICAL PROPERTIES</scope>
    <source>
        <strain>FGSC A4 / ATCC 38163 / CBS 112.46 / NRRL 194 / M139</strain>
    </source>
</reference>
<reference key="2">
    <citation type="journal article" date="2005" name="Nature">
        <title>Sequencing of Aspergillus nidulans and comparative analysis with A. fumigatus and A. oryzae.</title>
        <authorList>
            <person name="Galagan J.E."/>
            <person name="Calvo S.E."/>
            <person name="Cuomo C."/>
            <person name="Ma L.-J."/>
            <person name="Wortman J.R."/>
            <person name="Batzoglou S."/>
            <person name="Lee S.-I."/>
            <person name="Bastuerkmen M."/>
            <person name="Spevak C.C."/>
            <person name="Clutterbuck J."/>
            <person name="Kapitonov V."/>
            <person name="Jurka J."/>
            <person name="Scazzocchio C."/>
            <person name="Farman M.L."/>
            <person name="Butler J."/>
            <person name="Purcell S."/>
            <person name="Harris S."/>
            <person name="Braus G.H."/>
            <person name="Draht O."/>
            <person name="Busch S."/>
            <person name="D'Enfert C."/>
            <person name="Bouchier C."/>
            <person name="Goldman G.H."/>
            <person name="Bell-Pedersen D."/>
            <person name="Griffiths-Jones S."/>
            <person name="Doonan J.H."/>
            <person name="Yu J."/>
            <person name="Vienken K."/>
            <person name="Pain A."/>
            <person name="Freitag M."/>
            <person name="Selker E.U."/>
            <person name="Archer D.B."/>
            <person name="Penalva M.A."/>
            <person name="Oakley B.R."/>
            <person name="Momany M."/>
            <person name="Tanaka T."/>
            <person name="Kumagai T."/>
            <person name="Asai K."/>
            <person name="Machida M."/>
            <person name="Nierman W.C."/>
            <person name="Denning D.W."/>
            <person name="Caddick M.X."/>
            <person name="Hynes M."/>
            <person name="Paoletti M."/>
            <person name="Fischer R."/>
            <person name="Miller B.L."/>
            <person name="Dyer P.S."/>
            <person name="Sachs M.S."/>
            <person name="Osmani S.A."/>
            <person name="Birren B.W."/>
        </authorList>
    </citation>
    <scope>NUCLEOTIDE SEQUENCE [LARGE SCALE GENOMIC DNA]</scope>
    <source>
        <strain>FGSC A4 / ATCC 38163 / CBS 112.46 / NRRL 194 / M139</strain>
    </source>
</reference>
<reference key="3">
    <citation type="journal article" date="2009" name="Fungal Genet. Biol.">
        <title>The 2008 update of the Aspergillus nidulans genome annotation: a community effort.</title>
        <authorList>
            <person name="Wortman J.R."/>
            <person name="Gilsenan J.M."/>
            <person name="Joardar V."/>
            <person name="Deegan J."/>
            <person name="Clutterbuck J."/>
            <person name="Andersen M.R."/>
            <person name="Archer D."/>
            <person name="Bencina M."/>
            <person name="Braus G."/>
            <person name="Coutinho P."/>
            <person name="von Dohren H."/>
            <person name="Doonan J."/>
            <person name="Driessen A.J."/>
            <person name="Durek P."/>
            <person name="Espeso E."/>
            <person name="Fekete E."/>
            <person name="Flipphi M."/>
            <person name="Estrada C.G."/>
            <person name="Geysens S."/>
            <person name="Goldman G."/>
            <person name="de Groot P.W."/>
            <person name="Hansen K."/>
            <person name="Harris S.D."/>
            <person name="Heinekamp T."/>
            <person name="Helmstaedt K."/>
            <person name="Henrissat B."/>
            <person name="Hofmann G."/>
            <person name="Homan T."/>
            <person name="Horio T."/>
            <person name="Horiuchi H."/>
            <person name="James S."/>
            <person name="Jones M."/>
            <person name="Karaffa L."/>
            <person name="Karanyi Z."/>
            <person name="Kato M."/>
            <person name="Keller N."/>
            <person name="Kelly D.E."/>
            <person name="Kiel J.A."/>
            <person name="Kim J.M."/>
            <person name="van der Klei I.J."/>
            <person name="Klis F.M."/>
            <person name="Kovalchuk A."/>
            <person name="Krasevec N."/>
            <person name="Kubicek C.P."/>
            <person name="Liu B."/>
            <person name="Maccabe A."/>
            <person name="Meyer V."/>
            <person name="Mirabito P."/>
            <person name="Miskei M."/>
            <person name="Mos M."/>
            <person name="Mullins J."/>
            <person name="Nelson D.R."/>
            <person name="Nielsen J."/>
            <person name="Oakley B.R."/>
            <person name="Osmani S.A."/>
            <person name="Pakula T."/>
            <person name="Paszewski A."/>
            <person name="Paulsen I."/>
            <person name="Pilsyk S."/>
            <person name="Pocsi I."/>
            <person name="Punt P.J."/>
            <person name="Ram A.F."/>
            <person name="Ren Q."/>
            <person name="Robellet X."/>
            <person name="Robson G."/>
            <person name="Seiboth B."/>
            <person name="van Solingen P."/>
            <person name="Specht T."/>
            <person name="Sun J."/>
            <person name="Taheri-Talesh N."/>
            <person name="Takeshita N."/>
            <person name="Ussery D."/>
            <person name="vanKuyk P.A."/>
            <person name="Visser H."/>
            <person name="van de Vondervoort P.J."/>
            <person name="de Vries R.P."/>
            <person name="Walton J."/>
            <person name="Xiang X."/>
            <person name="Xiong Y."/>
            <person name="Zeng A.P."/>
            <person name="Brandt B.W."/>
            <person name="Cornell M.J."/>
            <person name="van den Hondel C.A."/>
            <person name="Visser J."/>
            <person name="Oliver S.G."/>
            <person name="Turner G."/>
        </authorList>
    </citation>
    <scope>GENOME REANNOTATION</scope>
    <source>
        <strain>FGSC A4 / ATCC 38163 / CBS 112.46 / NRRL 194 / M139</strain>
    </source>
</reference>
<protein>
    <recommendedName>
        <fullName>Endopolygalacturonase AN8327</fullName>
        <ecNumber>3.2.1.15</ecNumber>
    </recommendedName>
    <alternativeName>
        <fullName>Pectinase AN8327</fullName>
    </alternativeName>
    <alternativeName>
        <fullName>Polygalacturonase AN8327</fullName>
    </alternativeName>
</protein>
<sequence length="380" mass="39360">MFYALGPLALFAFATEVMATPVAYPMTTASPTLAKRDSCTFSGSDGAASASRSQTDCATITLSDITVPSGTTLDLSDLEDDTTVIFEGTTSWEYEEWDGPLLQIKGNGITIKGADGAKLNPDGSRWWDGEGSNGGVTKPKFFYAHDLTDSTIQNLYIENTPVQAVSINGCDGLTITDMTIDNSAGDDAGGHNTDGFDIGESSNVVITGAKVYNQDDCVAVNSGTSITFSGGTCSGGHGLSIGSVGGRDDNTVDTVTFKDSTVSNSVNGIRIKAKSGETGEIKGVTYSGISLESISDYGILIEQNYDGGDLDGEVTSGIPITDLTIENISGSGAVDSDGYNIVIVCGDDACSNWTWSDVEVTGGEDYGSCENVPSVASCST</sequence>
<feature type="signal peptide" evidence="2">
    <location>
        <begin position="1"/>
        <end position="19"/>
    </location>
</feature>
<feature type="propeptide" id="PRO_0000393694" evidence="2">
    <location>
        <begin position="20"/>
        <end position="35"/>
    </location>
</feature>
<feature type="chain" id="PRO_0000393695" description="Endopolygalacturonase AN8327">
    <location>
        <begin position="36"/>
        <end position="380"/>
    </location>
</feature>
<feature type="repeat" description="PbH1 1">
    <location>
        <begin position="147"/>
        <end position="169"/>
    </location>
</feature>
<feature type="repeat" description="PbH1 2">
    <location>
        <begin position="170"/>
        <end position="200"/>
    </location>
</feature>
<feature type="repeat" description="PbH1 3">
    <location>
        <begin position="201"/>
        <end position="222"/>
    </location>
</feature>
<feature type="repeat" description="PbH1 4">
    <location>
        <begin position="223"/>
        <end position="243"/>
    </location>
</feature>
<feature type="repeat" description="PbH1 5">
    <location>
        <begin position="252"/>
        <end position="273"/>
    </location>
</feature>
<feature type="repeat" description="PbH1 6">
    <location>
        <begin position="281"/>
        <end position="303"/>
    </location>
</feature>
<feature type="repeat" description="PbH1 7">
    <location>
        <begin position="315"/>
        <end position="338"/>
    </location>
</feature>
<feature type="active site" description="Proton donor" evidence="3">
    <location>
        <position position="215"/>
    </location>
</feature>
<feature type="active site" evidence="3">
    <location>
        <position position="237"/>
    </location>
</feature>
<feature type="glycosylation site" description="N-linked (GlcNAc...) asparagine" evidence="2">
    <location>
        <position position="327"/>
    </location>
</feature>
<feature type="glycosylation site" description="N-linked (GlcNAc...) asparagine" evidence="2">
    <location>
        <position position="352"/>
    </location>
</feature>
<feature type="disulfide bond" evidence="1">
    <location>
        <begin position="39"/>
        <end position="57"/>
    </location>
</feature>
<feature type="disulfide bond" evidence="1">
    <location>
        <begin position="217"/>
        <end position="233"/>
    </location>
</feature>
<feature type="disulfide bond" evidence="1">
    <location>
        <begin position="345"/>
        <end position="350"/>
    </location>
</feature>
<feature type="disulfide bond" evidence="1">
    <location>
        <begin position="369"/>
        <end position="378"/>
    </location>
</feature>
<comment type="function">
    <text evidence="4">Involved in maceration and soft-rotting of plant tissue. Hydrolyzes the 1,4-alpha glycosidic bonds of de-esterified pectate in the smooth region of the plant cell wall.</text>
</comment>
<comment type="catalytic activity">
    <reaction>
        <text>(1,4-alpha-D-galacturonosyl)n+m + H2O = (1,4-alpha-D-galacturonosyl)n + (1,4-alpha-D-galacturonosyl)m.</text>
        <dbReference type="EC" id="3.2.1.15"/>
    </reaction>
</comment>
<comment type="biophysicochemical properties">
    <phDependence>
        <text evidence="4">Optimum pH is 4.8.</text>
    </phDependence>
    <temperatureDependence>
        <text evidence="4">Optimum temperature is 48 degrees Celsius.</text>
    </temperatureDependence>
</comment>
<comment type="subcellular location">
    <subcellularLocation>
        <location evidence="5">Secreted</location>
    </subcellularLocation>
</comment>
<comment type="similarity">
    <text evidence="5">Belongs to the glycosyl hydrolase 28 family.</text>
</comment>
<evidence type="ECO:0000250" key="1"/>
<evidence type="ECO:0000255" key="2"/>
<evidence type="ECO:0000255" key="3">
    <source>
        <dbReference type="PROSITE-ProRule" id="PRU10052"/>
    </source>
</evidence>
<evidence type="ECO:0000269" key="4">
    <source>
    </source>
</evidence>
<evidence type="ECO:0000305" key="5"/>
<gene>
    <name type="ORF">AN8327</name>
</gene>